<accession>Q00663</accession>
<keyword id="KW-0002">3D-structure</keyword>
<keyword id="KW-0064">Aspartyl protease</keyword>
<keyword id="KW-0165">Cleavage on pair of basic residues</keyword>
<keyword id="KW-0903">Direct protein sequencing</keyword>
<keyword id="KW-1015">Disulfide bond</keyword>
<keyword id="KW-0325">Glycoprotein</keyword>
<keyword id="KW-0378">Hydrolase</keyword>
<keyword id="KW-0645">Protease</keyword>
<keyword id="KW-0964">Secreted</keyword>
<keyword id="KW-0732">Signal</keyword>
<keyword id="KW-0865">Zymogen</keyword>
<organism>
    <name type="scientific">Candida tropicalis</name>
    <name type="common">Yeast</name>
    <dbReference type="NCBI Taxonomy" id="5482"/>
    <lineage>
        <taxon>Eukaryota</taxon>
        <taxon>Fungi</taxon>
        <taxon>Dikarya</taxon>
        <taxon>Ascomycota</taxon>
        <taxon>Saccharomycotina</taxon>
        <taxon>Pichiomycetes</taxon>
        <taxon>Debaryomycetaceae</taxon>
        <taxon>Candida/Lodderomyces clade</taxon>
        <taxon>Candida</taxon>
    </lineage>
</organism>
<proteinExistence type="evidence at protein level"/>
<gene>
    <name type="primary">SAPT1</name>
</gene>
<sequence length="394" mass="42559">MATIFLFTKNVFIALAFALFAQGLTIPDGIEKRTDKVVSLDFTVIRKPFNATAHRLIQKRSDVPTTLINEGPSYAADIVVGSNQQKQTVVIDTGSSDLWVVDTDAECQVTYSGQTNNFCKQEGTFDPSSSSSAQNLNQDFSIEYGDLTSSQGSFYKDTVGFGGISIKNQQFADVTTTSVDQGIMGIGFTAVEAGYNLYSNVPVTLKKQGIINKNAYSCDLNSEDASTGKIIFGGVDNAKYTGTLTALPVTSSVELRVHLGSINFDGTSVSTNADVVLDSGTTITYFSQSTADKFARIVGATWDSRNEIYRLPSCDLSGDAVVNFDQGVKITVPLSELILKDSDSSICYFGISRNDANILGDNFLRRAYIVYDLDDKTISLAQVKYTSSSDISAL</sequence>
<protein>
    <recommendedName>
        <fullName>Candidapepsin</fullName>
        <ecNumber>3.4.23.24</ecNumber>
    </recommendedName>
    <alternativeName>
        <fullName>ACP</fullName>
    </alternativeName>
    <alternativeName>
        <fullName>Aspartate protease</fullName>
    </alternativeName>
    <alternativeName>
        <fullName>Secreted aspartic proteinase</fullName>
        <shortName>SAPT</shortName>
    </alternativeName>
</protein>
<dbReference type="EC" id="3.4.23.24"/>
<dbReference type="EMBL" id="X61438">
    <property type="protein sequence ID" value="CAA43678.1"/>
    <property type="molecule type" value="Genomic_DNA"/>
</dbReference>
<dbReference type="PIR" id="S16971">
    <property type="entry name" value="S16971"/>
</dbReference>
<dbReference type="PDB" id="1J71">
    <property type="method" value="X-ray"/>
    <property type="resolution" value="1.80 A"/>
    <property type="chains" value="A=61-394"/>
</dbReference>
<dbReference type="PDBsum" id="1J71"/>
<dbReference type="SMR" id="Q00663"/>
<dbReference type="MEROPS" id="A01.037"/>
<dbReference type="GlyCosmos" id="Q00663">
    <property type="glycosylation" value="1 site, No reported glycans"/>
</dbReference>
<dbReference type="VEuPathDB" id="FungiDB:CTMYA2_048760"/>
<dbReference type="VEuPathDB" id="FungiDB:CTRG_02432"/>
<dbReference type="BRENDA" id="3.4.23.24">
    <property type="organism ID" value="1146"/>
</dbReference>
<dbReference type="EvolutionaryTrace" id="Q00663"/>
<dbReference type="PHI-base" id="PHI:17"/>
<dbReference type="GO" id="GO:0005576">
    <property type="term" value="C:extracellular region"/>
    <property type="evidence" value="ECO:0007669"/>
    <property type="project" value="UniProtKB-SubCell"/>
</dbReference>
<dbReference type="GO" id="GO:0004190">
    <property type="term" value="F:aspartic-type endopeptidase activity"/>
    <property type="evidence" value="ECO:0007669"/>
    <property type="project" value="UniProtKB-KW"/>
</dbReference>
<dbReference type="GO" id="GO:0006508">
    <property type="term" value="P:proteolysis"/>
    <property type="evidence" value="ECO:0007669"/>
    <property type="project" value="UniProtKB-KW"/>
</dbReference>
<dbReference type="CDD" id="cd05474">
    <property type="entry name" value="SAP_like"/>
    <property type="match status" value="1"/>
</dbReference>
<dbReference type="FunFam" id="2.40.70.10:FF:000011">
    <property type="entry name" value="Aspartic protease"/>
    <property type="match status" value="1"/>
</dbReference>
<dbReference type="FunFam" id="2.40.70.10:FF:000023">
    <property type="entry name" value="Aspartic protease"/>
    <property type="match status" value="1"/>
</dbReference>
<dbReference type="Gene3D" id="2.40.70.10">
    <property type="entry name" value="Acid Proteases"/>
    <property type="match status" value="2"/>
</dbReference>
<dbReference type="InterPro" id="IPR001461">
    <property type="entry name" value="Aspartic_peptidase_A1"/>
</dbReference>
<dbReference type="InterPro" id="IPR001969">
    <property type="entry name" value="Aspartic_peptidase_AS"/>
</dbReference>
<dbReference type="InterPro" id="IPR033121">
    <property type="entry name" value="PEPTIDASE_A1"/>
</dbReference>
<dbReference type="InterPro" id="IPR021109">
    <property type="entry name" value="Peptidase_aspartic_dom_sf"/>
</dbReference>
<dbReference type="InterPro" id="IPR033876">
    <property type="entry name" value="SAP-like"/>
</dbReference>
<dbReference type="PANTHER" id="PTHR47966:SF65">
    <property type="entry name" value="ASPARTIC-TYPE ENDOPEPTIDASE"/>
    <property type="match status" value="1"/>
</dbReference>
<dbReference type="PANTHER" id="PTHR47966">
    <property type="entry name" value="BETA-SITE APP-CLEAVING ENZYME, ISOFORM A-RELATED"/>
    <property type="match status" value="1"/>
</dbReference>
<dbReference type="Pfam" id="PF00026">
    <property type="entry name" value="Asp"/>
    <property type="match status" value="1"/>
</dbReference>
<dbReference type="PRINTS" id="PR00792">
    <property type="entry name" value="PEPSIN"/>
</dbReference>
<dbReference type="SUPFAM" id="SSF50630">
    <property type="entry name" value="Acid proteases"/>
    <property type="match status" value="1"/>
</dbReference>
<dbReference type="PROSITE" id="PS00141">
    <property type="entry name" value="ASP_PROTEASE"/>
    <property type="match status" value="2"/>
</dbReference>
<dbReference type="PROSITE" id="PS51767">
    <property type="entry name" value="PEPTIDASE_A1"/>
    <property type="match status" value="1"/>
</dbReference>
<reference key="1">
    <citation type="journal article" date="1991" name="FEBS Lett.">
        <title>Isolation and nucleotide sequence of the extracellular acid protease gene (ACP) from the yeast Candida tropicalis.</title>
        <authorList>
            <person name="Togni G."/>
            <person name="Sanglard D."/>
            <person name="Falchetto R."/>
            <person name="Monod M."/>
        </authorList>
    </citation>
    <scope>NUCLEOTIDE SEQUENCE [GENOMIC DNA]</scope>
    <scope>PROTEIN SEQUENCE OF 61-88</scope>
    <source>
        <strain>ATCC 750 / CBS 94 / DSM 11953 / JCM 1541 / NBRC 1400</strain>
    </source>
</reference>
<reference key="2">
    <citation type="journal article" date="1997" name="Biochemistry">
        <title>High-resolution structure of the extracellular aspartic proteinase from Candida tropicalis yeast.</title>
        <authorList>
            <person name="Symersky J."/>
            <person name="Monod M."/>
            <person name="Foundling S.I."/>
        </authorList>
    </citation>
    <scope>X-RAY CRYSTALLOGRAPHY (1.8 ANGSTROMS) OF 61-394 IN COMPLEX WITH SUBSTRATE PEPTIDE</scope>
    <source>
        <strain>ATCC 750 / CBS 94 / DSM 11953 / JCM 1541 / NBRC 1400</strain>
    </source>
</reference>
<evidence type="ECO:0000255" key="1"/>
<evidence type="ECO:0000255" key="2">
    <source>
        <dbReference type="PROSITE-ProRule" id="PRU01103"/>
    </source>
</evidence>
<evidence type="ECO:0000269" key="3">
    <source>
    </source>
</evidence>
<evidence type="ECO:0000305" key="4"/>
<evidence type="ECO:0007829" key="5">
    <source>
        <dbReference type="PDB" id="1J71"/>
    </source>
</evidence>
<feature type="signal peptide" evidence="1">
    <location>
        <begin position="1"/>
        <end position="23"/>
    </location>
</feature>
<feature type="propeptide" id="PRO_0000025867" description="Activation peptide" evidence="3">
    <location>
        <begin position="24"/>
        <end position="60"/>
    </location>
</feature>
<feature type="chain" id="PRO_0000025868" description="Candidapepsin">
    <location>
        <begin position="61"/>
        <end position="394"/>
    </location>
</feature>
<feature type="domain" description="Peptidase A1" evidence="2">
    <location>
        <begin position="74"/>
        <end position="381"/>
    </location>
</feature>
<feature type="active site">
    <location>
        <position position="92"/>
    </location>
</feature>
<feature type="active site">
    <location>
        <position position="278"/>
    </location>
</feature>
<feature type="glycosylation site" description="N-linked (GlcNAc...) asparagine" evidence="1">
    <location>
        <position position="50"/>
    </location>
</feature>
<feature type="disulfide bond">
    <location>
        <begin position="107"/>
        <end position="119"/>
    </location>
</feature>
<feature type="disulfide bond">
    <location>
        <begin position="314"/>
        <end position="347"/>
    </location>
</feature>
<feature type="sequence conflict" description="In Ref. 2." evidence="4" ref="2">
    <original>V</original>
    <variation>D</variation>
    <location>
        <position position="191"/>
    </location>
</feature>
<feature type="sequence conflict" description="In Ref. 2." evidence="4" ref="2">
    <original>S</original>
    <variation>D</variation>
    <location>
        <position position="199"/>
    </location>
</feature>
<feature type="sequence conflict" description="In Ref. 2." evidence="4" ref="2">
    <original>C</original>
    <variation>L</variation>
    <location>
        <position position="218"/>
    </location>
</feature>
<feature type="sequence conflict" description="In Ref. 2." evidence="4" ref="2">
    <original>D</original>
    <variation>Y</variation>
    <location>
        <position position="219"/>
    </location>
</feature>
<feature type="sequence conflict" description="In Ref. 2." evidence="4" ref="2">
    <original>V</original>
    <variation>F</variation>
    <location>
        <position position="322"/>
    </location>
</feature>
<feature type="strand" evidence="5">
    <location>
        <begin position="63"/>
        <end position="69"/>
    </location>
</feature>
<feature type="strand" evidence="5">
    <location>
        <begin position="71"/>
        <end position="80"/>
    </location>
</feature>
<feature type="turn" evidence="5">
    <location>
        <begin position="81"/>
        <end position="84"/>
    </location>
</feature>
<feature type="strand" evidence="5">
    <location>
        <begin position="85"/>
        <end position="92"/>
    </location>
</feature>
<feature type="strand" evidence="5">
    <location>
        <begin position="98"/>
        <end position="107"/>
    </location>
</feature>
<feature type="helix" evidence="5">
    <location>
        <begin position="118"/>
        <end position="120"/>
    </location>
</feature>
<feature type="helix" evidence="5">
    <location>
        <begin position="127"/>
        <end position="129"/>
    </location>
</feature>
<feature type="strand" evidence="5">
    <location>
        <begin position="134"/>
        <end position="144"/>
    </location>
</feature>
<feature type="strand" evidence="5">
    <location>
        <begin position="149"/>
        <end position="161"/>
    </location>
</feature>
<feature type="strand" evidence="5">
    <location>
        <begin position="164"/>
        <end position="181"/>
    </location>
</feature>
<feature type="strand" evidence="5">
    <location>
        <begin position="183"/>
        <end position="185"/>
    </location>
</feature>
<feature type="helix" evidence="5">
    <location>
        <begin position="189"/>
        <end position="191"/>
    </location>
</feature>
<feature type="helix" evidence="5">
    <location>
        <begin position="201"/>
        <end position="207"/>
    </location>
</feature>
<feature type="strand" evidence="5">
    <location>
        <begin position="212"/>
        <end position="219"/>
    </location>
</feature>
<feature type="strand" evidence="5">
    <location>
        <begin position="226"/>
        <end position="232"/>
    </location>
</feature>
<feature type="strand" evidence="5">
    <location>
        <begin position="234"/>
        <end position="236"/>
    </location>
</feature>
<feature type="strand" evidence="5">
    <location>
        <begin position="239"/>
        <end position="248"/>
    </location>
</feature>
<feature type="strand" evidence="5">
    <location>
        <begin position="252"/>
        <end position="254"/>
    </location>
</feature>
<feature type="strand" evidence="5">
    <location>
        <begin position="256"/>
        <end position="264"/>
    </location>
</feature>
<feature type="strand" evidence="5">
    <location>
        <begin position="267"/>
        <end position="277"/>
    </location>
</feature>
<feature type="strand" evidence="5">
    <location>
        <begin position="282"/>
        <end position="286"/>
    </location>
</feature>
<feature type="helix" evidence="5">
    <location>
        <begin position="288"/>
        <end position="298"/>
    </location>
</feature>
<feature type="strand" evidence="5">
    <location>
        <begin position="301"/>
        <end position="303"/>
    </location>
</feature>
<feature type="turn" evidence="5">
    <location>
        <begin position="304"/>
        <end position="307"/>
    </location>
</feature>
<feature type="strand" evidence="5">
    <location>
        <begin position="308"/>
        <end position="310"/>
    </location>
</feature>
<feature type="strand" evidence="5">
    <location>
        <begin position="312"/>
        <end position="314"/>
    </location>
</feature>
<feature type="strand" evidence="5">
    <location>
        <begin position="318"/>
        <end position="325"/>
    </location>
</feature>
<feature type="strand" evidence="5">
    <location>
        <begin position="329"/>
        <end position="333"/>
    </location>
</feature>
<feature type="helix" evidence="5">
    <location>
        <begin position="334"/>
        <end position="337"/>
    </location>
</feature>
<feature type="strand" evidence="5">
    <location>
        <begin position="338"/>
        <end position="340"/>
    </location>
</feature>
<feature type="strand" evidence="5">
    <location>
        <begin position="342"/>
        <end position="345"/>
    </location>
</feature>
<feature type="strand" evidence="5">
    <location>
        <begin position="347"/>
        <end position="353"/>
    </location>
</feature>
<feature type="helix" evidence="5">
    <location>
        <begin position="361"/>
        <end position="364"/>
    </location>
</feature>
<feature type="strand" evidence="5">
    <location>
        <begin position="367"/>
        <end position="372"/>
    </location>
</feature>
<feature type="turn" evidence="5">
    <location>
        <begin position="373"/>
        <end position="376"/>
    </location>
</feature>
<feature type="strand" evidence="5">
    <location>
        <begin position="377"/>
        <end position="383"/>
    </location>
</feature>
<feature type="strand" evidence="5">
    <location>
        <begin position="391"/>
        <end position="393"/>
    </location>
</feature>
<name>CARP_CANTR</name>
<comment type="catalytic activity">
    <reaction>
        <text>Preferential cleavage at the carboxyl of hydrophobic amino acids, but fails to cleave 15-Leu-|-Tyr-16, 16-Tyr-|-Leu-17 and 24-Phe-|-Phe-25 of insulin B chain. Activates trypsinogen, and degrades keratin.</text>
        <dbReference type="EC" id="3.4.23.24"/>
    </reaction>
</comment>
<comment type="subcellular location">
    <subcellularLocation>
        <location>Secreted</location>
    </subcellularLocation>
</comment>
<comment type="PTM">
    <text>O-glycosylated.</text>
</comment>
<comment type="similarity">
    <text evidence="4">Belongs to the peptidase A1 family.</text>
</comment>